<gene>
    <name evidence="1" type="primary">queA</name>
    <name type="ordered locus">SPAB_03183</name>
</gene>
<comment type="function">
    <text evidence="1">Transfers and isomerizes the ribose moiety from AdoMet to the 7-aminomethyl group of 7-deazaguanine (preQ1-tRNA) to give epoxyqueuosine (oQ-tRNA).</text>
</comment>
<comment type="catalytic activity">
    <reaction evidence="1">
        <text>7-aminomethyl-7-carbaguanosine(34) in tRNA + S-adenosyl-L-methionine = epoxyqueuosine(34) in tRNA + adenine + L-methionine + 2 H(+)</text>
        <dbReference type="Rhea" id="RHEA:32155"/>
        <dbReference type="Rhea" id="RHEA-COMP:10342"/>
        <dbReference type="Rhea" id="RHEA-COMP:18582"/>
        <dbReference type="ChEBI" id="CHEBI:15378"/>
        <dbReference type="ChEBI" id="CHEBI:16708"/>
        <dbReference type="ChEBI" id="CHEBI:57844"/>
        <dbReference type="ChEBI" id="CHEBI:59789"/>
        <dbReference type="ChEBI" id="CHEBI:82833"/>
        <dbReference type="ChEBI" id="CHEBI:194443"/>
        <dbReference type="EC" id="2.4.99.17"/>
    </reaction>
</comment>
<comment type="pathway">
    <text evidence="1">tRNA modification; tRNA-queuosine biosynthesis.</text>
</comment>
<comment type="subunit">
    <text evidence="1">Monomer.</text>
</comment>
<comment type="subcellular location">
    <subcellularLocation>
        <location evidence="1">Cytoplasm</location>
    </subcellularLocation>
</comment>
<comment type="similarity">
    <text evidence="1">Belongs to the QueA family.</text>
</comment>
<proteinExistence type="inferred from homology"/>
<reference key="1">
    <citation type="submission" date="2007-11" db="EMBL/GenBank/DDBJ databases">
        <authorList>
            <consortium name="The Salmonella enterica serovar Paratyphi B Genome Sequencing Project"/>
            <person name="McClelland M."/>
            <person name="Sanderson E.K."/>
            <person name="Porwollik S."/>
            <person name="Spieth J."/>
            <person name="Clifton W.S."/>
            <person name="Fulton R."/>
            <person name="Cordes M."/>
            <person name="Wollam A."/>
            <person name="Shah N."/>
            <person name="Pepin K."/>
            <person name="Bhonagiri V."/>
            <person name="Nash W."/>
            <person name="Johnson M."/>
            <person name="Thiruvilangam P."/>
            <person name="Wilson R."/>
        </authorList>
    </citation>
    <scope>NUCLEOTIDE SEQUENCE [LARGE SCALE GENOMIC DNA]</scope>
    <source>
        <strain>ATCC BAA-1250 / SPB7</strain>
    </source>
</reference>
<evidence type="ECO:0000255" key="1">
    <source>
        <dbReference type="HAMAP-Rule" id="MF_00113"/>
    </source>
</evidence>
<organism>
    <name type="scientific">Salmonella paratyphi B (strain ATCC BAA-1250 / SPB7)</name>
    <dbReference type="NCBI Taxonomy" id="1016998"/>
    <lineage>
        <taxon>Bacteria</taxon>
        <taxon>Pseudomonadati</taxon>
        <taxon>Pseudomonadota</taxon>
        <taxon>Gammaproteobacteria</taxon>
        <taxon>Enterobacterales</taxon>
        <taxon>Enterobacteriaceae</taxon>
        <taxon>Salmonella</taxon>
    </lineage>
</organism>
<sequence length="354" mass="39256">MRVTDFSFELPESLIAHYPQPERSRCRLLSLEGPTGALTHGTFTDLLDKLNPGDLLVFNNTRVIPARLFGRKASGGKIEVLVERMLDDKRILAHIRASKAPKPGTELLLGDDESIHATMTARHGALFEVEFNDPRPVLDILNAIGHMPLPPYIDRPDEDADRELYQTVYSEKPGAVAAPTAGLHFDEPLLAALREKGVEMAFVTLHVGAGTFQPVRVDTIEDHIMHSEYAEVPQEVVDAVLAAKARGNRVIAVGTTSVRSLESAAQAAKSDLIEPFFGDTQIFIYPGYQYKVIDALITNFHLPESTLIMLVSAFAGYQHTMNAYKTAVEQKYRFFSYGDAMFITYNPQAISERP</sequence>
<accession>A9MX31</accession>
<dbReference type="EC" id="2.4.99.17" evidence="1"/>
<dbReference type="EMBL" id="CP000886">
    <property type="protein sequence ID" value="ABX68544.1"/>
    <property type="molecule type" value="Genomic_DNA"/>
</dbReference>
<dbReference type="RefSeq" id="WP_001266530.1">
    <property type="nucleotide sequence ID" value="NC_010102.1"/>
</dbReference>
<dbReference type="SMR" id="A9MX31"/>
<dbReference type="KEGG" id="spq:SPAB_03183"/>
<dbReference type="PATRIC" id="fig|1016998.12.peg.3004"/>
<dbReference type="HOGENOM" id="CLU_039110_1_0_6"/>
<dbReference type="BioCyc" id="SENT1016998:SPAB_RS13000-MONOMER"/>
<dbReference type="UniPathway" id="UPA00392"/>
<dbReference type="Proteomes" id="UP000008556">
    <property type="component" value="Chromosome"/>
</dbReference>
<dbReference type="GO" id="GO:0005737">
    <property type="term" value="C:cytoplasm"/>
    <property type="evidence" value="ECO:0007669"/>
    <property type="project" value="UniProtKB-SubCell"/>
</dbReference>
<dbReference type="GO" id="GO:0051075">
    <property type="term" value="F:S-adenosylmethionine:tRNA ribosyltransferase-isomerase activity"/>
    <property type="evidence" value="ECO:0007669"/>
    <property type="project" value="UniProtKB-EC"/>
</dbReference>
<dbReference type="GO" id="GO:0008616">
    <property type="term" value="P:queuosine biosynthetic process"/>
    <property type="evidence" value="ECO:0007669"/>
    <property type="project" value="UniProtKB-UniRule"/>
</dbReference>
<dbReference type="GO" id="GO:0002099">
    <property type="term" value="P:tRNA wobble guanine modification"/>
    <property type="evidence" value="ECO:0007669"/>
    <property type="project" value="TreeGrafter"/>
</dbReference>
<dbReference type="FunFam" id="2.40.10.240:FF:000001">
    <property type="entry name" value="S-adenosylmethionine:tRNA ribosyltransferase-isomerase"/>
    <property type="match status" value="1"/>
</dbReference>
<dbReference type="FunFam" id="3.40.1780.10:FF:000001">
    <property type="entry name" value="S-adenosylmethionine:tRNA ribosyltransferase-isomerase"/>
    <property type="match status" value="1"/>
</dbReference>
<dbReference type="Gene3D" id="2.40.10.240">
    <property type="entry name" value="QueA-like"/>
    <property type="match status" value="1"/>
</dbReference>
<dbReference type="Gene3D" id="3.40.1780.10">
    <property type="entry name" value="QueA-like"/>
    <property type="match status" value="1"/>
</dbReference>
<dbReference type="HAMAP" id="MF_00113">
    <property type="entry name" value="QueA"/>
    <property type="match status" value="1"/>
</dbReference>
<dbReference type="InterPro" id="IPR003699">
    <property type="entry name" value="QueA"/>
</dbReference>
<dbReference type="InterPro" id="IPR042118">
    <property type="entry name" value="QueA_dom1"/>
</dbReference>
<dbReference type="InterPro" id="IPR042119">
    <property type="entry name" value="QueA_dom2"/>
</dbReference>
<dbReference type="InterPro" id="IPR036100">
    <property type="entry name" value="QueA_sf"/>
</dbReference>
<dbReference type="NCBIfam" id="NF001140">
    <property type="entry name" value="PRK00147.1"/>
    <property type="match status" value="1"/>
</dbReference>
<dbReference type="NCBIfam" id="TIGR00113">
    <property type="entry name" value="queA"/>
    <property type="match status" value="1"/>
</dbReference>
<dbReference type="PANTHER" id="PTHR30307">
    <property type="entry name" value="S-ADENOSYLMETHIONINE:TRNA RIBOSYLTRANSFERASE-ISOMERASE"/>
    <property type="match status" value="1"/>
</dbReference>
<dbReference type="PANTHER" id="PTHR30307:SF0">
    <property type="entry name" value="S-ADENOSYLMETHIONINE:TRNA RIBOSYLTRANSFERASE-ISOMERASE"/>
    <property type="match status" value="1"/>
</dbReference>
<dbReference type="Pfam" id="PF02547">
    <property type="entry name" value="Queuosine_synth"/>
    <property type="match status" value="1"/>
</dbReference>
<dbReference type="SUPFAM" id="SSF111337">
    <property type="entry name" value="QueA-like"/>
    <property type="match status" value="1"/>
</dbReference>
<name>QUEA_SALPB</name>
<feature type="chain" id="PRO_1000076017" description="S-adenosylmethionine:tRNA ribosyltransferase-isomerase">
    <location>
        <begin position="1"/>
        <end position="354"/>
    </location>
</feature>
<keyword id="KW-0963">Cytoplasm</keyword>
<keyword id="KW-0671">Queuosine biosynthesis</keyword>
<keyword id="KW-0949">S-adenosyl-L-methionine</keyword>
<keyword id="KW-0808">Transferase</keyword>
<protein>
    <recommendedName>
        <fullName evidence="1">S-adenosylmethionine:tRNA ribosyltransferase-isomerase</fullName>
        <ecNumber evidence="1">2.4.99.17</ecNumber>
    </recommendedName>
    <alternativeName>
        <fullName evidence="1">Queuosine biosynthesis protein QueA</fullName>
    </alternativeName>
</protein>